<feature type="chain" id="PRO_1000038788" description="Lipoprotein signal peptidase">
    <location>
        <begin position="1"/>
        <end position="166"/>
    </location>
</feature>
<feature type="transmembrane region" description="Helical" evidence="1">
    <location>
        <begin position="10"/>
        <end position="30"/>
    </location>
</feature>
<feature type="transmembrane region" description="Helical" evidence="1">
    <location>
        <begin position="32"/>
        <end position="52"/>
    </location>
</feature>
<feature type="transmembrane region" description="Helical" evidence="1">
    <location>
        <begin position="71"/>
        <end position="91"/>
    </location>
</feature>
<feature type="transmembrane region" description="Helical" evidence="1">
    <location>
        <begin position="100"/>
        <end position="120"/>
    </location>
</feature>
<feature type="transmembrane region" description="Helical" evidence="1">
    <location>
        <begin position="135"/>
        <end position="155"/>
    </location>
</feature>
<feature type="active site" evidence="1">
    <location>
        <position position="126"/>
    </location>
</feature>
<feature type="active site" evidence="1">
    <location>
        <position position="144"/>
    </location>
</feature>
<comment type="function">
    <text evidence="1">This protein specifically catalyzes the removal of signal peptides from prolipoproteins.</text>
</comment>
<comment type="catalytic activity">
    <reaction evidence="1">
        <text>Release of signal peptides from bacterial membrane prolipoproteins. Hydrolyzes -Xaa-Yaa-Zaa-|-(S,diacylglyceryl)Cys-, in which Xaa is hydrophobic (preferably Leu), and Yaa (Ala or Ser) and Zaa (Gly or Ala) have small, neutral side chains.</text>
        <dbReference type="EC" id="3.4.23.36"/>
    </reaction>
</comment>
<comment type="pathway">
    <text evidence="1">Protein modification; lipoprotein biosynthesis (signal peptide cleavage).</text>
</comment>
<comment type="subcellular location">
    <subcellularLocation>
        <location evidence="1">Cell inner membrane</location>
        <topology evidence="1">Multi-pass membrane protein</topology>
    </subcellularLocation>
</comment>
<comment type="similarity">
    <text evidence="1">Belongs to the peptidase A8 family.</text>
</comment>
<name>LSPA_BURMS</name>
<dbReference type="EC" id="3.4.23.36" evidence="1"/>
<dbReference type="EMBL" id="CP000526">
    <property type="protein sequence ID" value="ABM50441.1"/>
    <property type="molecule type" value="Genomic_DNA"/>
</dbReference>
<dbReference type="RefSeq" id="WP_004186086.1">
    <property type="nucleotide sequence ID" value="NC_008785.1"/>
</dbReference>
<dbReference type="SMR" id="A1V6V3"/>
<dbReference type="GeneID" id="93059418"/>
<dbReference type="KEGG" id="bmv:BMASAVP1_A2659"/>
<dbReference type="HOGENOM" id="CLU_083252_4_0_4"/>
<dbReference type="UniPathway" id="UPA00665"/>
<dbReference type="GO" id="GO:0005886">
    <property type="term" value="C:plasma membrane"/>
    <property type="evidence" value="ECO:0007669"/>
    <property type="project" value="UniProtKB-SubCell"/>
</dbReference>
<dbReference type="GO" id="GO:0004190">
    <property type="term" value="F:aspartic-type endopeptidase activity"/>
    <property type="evidence" value="ECO:0007669"/>
    <property type="project" value="UniProtKB-UniRule"/>
</dbReference>
<dbReference type="GO" id="GO:0006508">
    <property type="term" value="P:proteolysis"/>
    <property type="evidence" value="ECO:0007669"/>
    <property type="project" value="UniProtKB-KW"/>
</dbReference>
<dbReference type="HAMAP" id="MF_00161">
    <property type="entry name" value="LspA"/>
    <property type="match status" value="1"/>
</dbReference>
<dbReference type="InterPro" id="IPR001872">
    <property type="entry name" value="Peptidase_A8"/>
</dbReference>
<dbReference type="NCBIfam" id="TIGR00077">
    <property type="entry name" value="lspA"/>
    <property type="match status" value="1"/>
</dbReference>
<dbReference type="PANTHER" id="PTHR33695">
    <property type="entry name" value="LIPOPROTEIN SIGNAL PEPTIDASE"/>
    <property type="match status" value="1"/>
</dbReference>
<dbReference type="PANTHER" id="PTHR33695:SF1">
    <property type="entry name" value="LIPOPROTEIN SIGNAL PEPTIDASE"/>
    <property type="match status" value="1"/>
</dbReference>
<dbReference type="Pfam" id="PF01252">
    <property type="entry name" value="Peptidase_A8"/>
    <property type="match status" value="1"/>
</dbReference>
<dbReference type="PRINTS" id="PR00781">
    <property type="entry name" value="LIPOSIGPTASE"/>
</dbReference>
<dbReference type="PROSITE" id="PS00855">
    <property type="entry name" value="SPASE_II"/>
    <property type="match status" value="1"/>
</dbReference>
<accession>A1V6V3</accession>
<sequence>MAKTLSKSSGGALAPWLGISLIVILFDQLTKIAVLKTFAYGAMHALTPFFNLTLIYNRGAAFGFLATAGGWQRWAFTALGIGATLVICYLLKRHGHQRLFSLSLALILGGALGNVIDRLIYGHVIDFLDFHVGAWHWPAFNLADSAITVGAVLLIYDELRRVRGAR</sequence>
<gene>
    <name evidence="1" type="primary">lspA</name>
    <name type="ordered locus">BMASAVP1_A2659</name>
</gene>
<organism>
    <name type="scientific">Burkholderia mallei (strain SAVP1)</name>
    <dbReference type="NCBI Taxonomy" id="320388"/>
    <lineage>
        <taxon>Bacteria</taxon>
        <taxon>Pseudomonadati</taxon>
        <taxon>Pseudomonadota</taxon>
        <taxon>Betaproteobacteria</taxon>
        <taxon>Burkholderiales</taxon>
        <taxon>Burkholderiaceae</taxon>
        <taxon>Burkholderia</taxon>
        <taxon>pseudomallei group</taxon>
    </lineage>
</organism>
<protein>
    <recommendedName>
        <fullName evidence="1">Lipoprotein signal peptidase</fullName>
        <ecNumber evidence="1">3.4.23.36</ecNumber>
    </recommendedName>
    <alternativeName>
        <fullName evidence="1">Prolipoprotein signal peptidase</fullName>
    </alternativeName>
    <alternativeName>
        <fullName evidence="1">Signal peptidase II</fullName>
        <shortName evidence="1">SPase II</shortName>
    </alternativeName>
</protein>
<keyword id="KW-0064">Aspartyl protease</keyword>
<keyword id="KW-0997">Cell inner membrane</keyword>
<keyword id="KW-1003">Cell membrane</keyword>
<keyword id="KW-0378">Hydrolase</keyword>
<keyword id="KW-0472">Membrane</keyword>
<keyword id="KW-0645">Protease</keyword>
<keyword id="KW-0812">Transmembrane</keyword>
<keyword id="KW-1133">Transmembrane helix</keyword>
<proteinExistence type="inferred from homology"/>
<reference key="1">
    <citation type="journal article" date="2010" name="Genome Biol. Evol.">
        <title>Continuing evolution of Burkholderia mallei through genome reduction and large-scale rearrangements.</title>
        <authorList>
            <person name="Losada L."/>
            <person name="Ronning C.M."/>
            <person name="DeShazer D."/>
            <person name="Woods D."/>
            <person name="Fedorova N."/>
            <person name="Kim H.S."/>
            <person name="Shabalina S.A."/>
            <person name="Pearson T.R."/>
            <person name="Brinkac L."/>
            <person name="Tan P."/>
            <person name="Nandi T."/>
            <person name="Crabtree J."/>
            <person name="Badger J."/>
            <person name="Beckstrom-Sternberg S."/>
            <person name="Saqib M."/>
            <person name="Schutzer S.E."/>
            <person name="Keim P."/>
            <person name="Nierman W.C."/>
        </authorList>
    </citation>
    <scope>NUCLEOTIDE SEQUENCE [LARGE SCALE GENOMIC DNA]</scope>
    <source>
        <strain>SAVP1</strain>
    </source>
</reference>
<evidence type="ECO:0000255" key="1">
    <source>
        <dbReference type="HAMAP-Rule" id="MF_00161"/>
    </source>
</evidence>